<feature type="chain" id="PRO_0000296583" description="Large ribosomal subunit protein bL32">
    <location>
        <begin position="1"/>
        <end position="56"/>
    </location>
</feature>
<reference key="1">
    <citation type="journal article" date="2006" name="Proc. Natl. Acad. Sci. U.S.A.">
        <title>Genome sequence of Synechococcus CC9311: insights into adaptation to a coastal environment.</title>
        <authorList>
            <person name="Palenik B."/>
            <person name="Ren Q."/>
            <person name="Dupont C.L."/>
            <person name="Myers G.S."/>
            <person name="Heidelberg J.F."/>
            <person name="Badger J.H."/>
            <person name="Madupu R."/>
            <person name="Nelson W.C."/>
            <person name="Brinkac L.M."/>
            <person name="Dodson R.J."/>
            <person name="Durkin A.S."/>
            <person name="Daugherty S.C."/>
            <person name="Sullivan S.A."/>
            <person name="Khouri H."/>
            <person name="Mohamoud Y."/>
            <person name="Halpin R."/>
            <person name="Paulsen I.T."/>
        </authorList>
    </citation>
    <scope>NUCLEOTIDE SEQUENCE [LARGE SCALE GENOMIC DNA]</scope>
    <source>
        <strain>CC9311</strain>
    </source>
</reference>
<evidence type="ECO:0000255" key="1">
    <source>
        <dbReference type="HAMAP-Rule" id="MF_00340"/>
    </source>
</evidence>
<evidence type="ECO:0000305" key="2"/>
<name>RL32_SYNS3</name>
<comment type="similarity">
    <text evidence="1">Belongs to the bacterial ribosomal protein bL32 family.</text>
</comment>
<keyword id="KW-1185">Reference proteome</keyword>
<keyword id="KW-0687">Ribonucleoprotein</keyword>
<keyword id="KW-0689">Ribosomal protein</keyword>
<gene>
    <name evidence="1" type="primary">rpmF</name>
    <name evidence="1" type="synonym">rpl32</name>
    <name type="ordered locus">sync_1319</name>
</gene>
<sequence>MAVPKKKTSKSKRNQRHAVWKAKAATAAQRAMSIGKSVLSGRAQGFVYPVADDSED</sequence>
<protein>
    <recommendedName>
        <fullName evidence="1">Large ribosomal subunit protein bL32</fullName>
    </recommendedName>
    <alternativeName>
        <fullName evidence="2">50S ribosomal protein L32</fullName>
    </alternativeName>
</protein>
<dbReference type="EMBL" id="CP000435">
    <property type="protein sequence ID" value="ABI47441.1"/>
    <property type="molecule type" value="Genomic_DNA"/>
</dbReference>
<dbReference type="RefSeq" id="WP_011619247.1">
    <property type="nucleotide sequence ID" value="NC_008319.1"/>
</dbReference>
<dbReference type="SMR" id="Q0IAJ5"/>
<dbReference type="STRING" id="64471.sync_1319"/>
<dbReference type="KEGG" id="syg:sync_1319"/>
<dbReference type="eggNOG" id="COG0333">
    <property type="taxonomic scope" value="Bacteria"/>
</dbReference>
<dbReference type="HOGENOM" id="CLU_199882_0_0_3"/>
<dbReference type="Proteomes" id="UP000001961">
    <property type="component" value="Chromosome"/>
</dbReference>
<dbReference type="GO" id="GO:0015934">
    <property type="term" value="C:large ribosomal subunit"/>
    <property type="evidence" value="ECO:0007669"/>
    <property type="project" value="InterPro"/>
</dbReference>
<dbReference type="GO" id="GO:0003735">
    <property type="term" value="F:structural constituent of ribosome"/>
    <property type="evidence" value="ECO:0007669"/>
    <property type="project" value="InterPro"/>
</dbReference>
<dbReference type="GO" id="GO:0006412">
    <property type="term" value="P:translation"/>
    <property type="evidence" value="ECO:0007669"/>
    <property type="project" value="UniProtKB-UniRule"/>
</dbReference>
<dbReference type="Gene3D" id="1.20.5.640">
    <property type="entry name" value="Single helix bin"/>
    <property type="match status" value="1"/>
</dbReference>
<dbReference type="HAMAP" id="MF_00340">
    <property type="entry name" value="Ribosomal_bL32"/>
    <property type="match status" value="1"/>
</dbReference>
<dbReference type="InterPro" id="IPR002677">
    <property type="entry name" value="Ribosomal_bL32"/>
</dbReference>
<dbReference type="InterPro" id="IPR044958">
    <property type="entry name" value="Ribosomal_bL32_plant/cyanobact"/>
</dbReference>
<dbReference type="InterPro" id="IPR011332">
    <property type="entry name" value="Ribosomal_zn-bd"/>
</dbReference>
<dbReference type="NCBIfam" id="TIGR01031">
    <property type="entry name" value="rpmF_bact"/>
    <property type="match status" value="1"/>
</dbReference>
<dbReference type="PANTHER" id="PTHR36083">
    <property type="entry name" value="50S RIBOSOMAL PROTEIN L32, CHLOROPLASTIC"/>
    <property type="match status" value="1"/>
</dbReference>
<dbReference type="PANTHER" id="PTHR36083:SF1">
    <property type="entry name" value="LARGE RIBOSOMAL SUBUNIT PROTEIN BL32C"/>
    <property type="match status" value="1"/>
</dbReference>
<dbReference type="Pfam" id="PF01783">
    <property type="entry name" value="Ribosomal_L32p"/>
    <property type="match status" value="1"/>
</dbReference>
<dbReference type="SUPFAM" id="SSF57829">
    <property type="entry name" value="Zn-binding ribosomal proteins"/>
    <property type="match status" value="1"/>
</dbReference>
<organism>
    <name type="scientific">Synechococcus sp. (strain CC9311)</name>
    <dbReference type="NCBI Taxonomy" id="64471"/>
    <lineage>
        <taxon>Bacteria</taxon>
        <taxon>Bacillati</taxon>
        <taxon>Cyanobacteriota</taxon>
        <taxon>Cyanophyceae</taxon>
        <taxon>Synechococcales</taxon>
        <taxon>Synechococcaceae</taxon>
        <taxon>Synechococcus</taxon>
    </lineage>
</organism>
<proteinExistence type="inferred from homology"/>
<accession>Q0IAJ5</accession>